<proteinExistence type="evidence at protein level"/>
<evidence type="ECO:0000250" key="1">
    <source>
        <dbReference type="UniProtKB" id="P0DQH6"/>
    </source>
</evidence>
<evidence type="ECO:0000255" key="2">
    <source>
        <dbReference type="PROSITE-ProRule" id="PRU01210"/>
    </source>
</evidence>
<evidence type="ECO:0000269" key="3">
    <source>
    </source>
</evidence>
<evidence type="ECO:0000303" key="4">
    <source>
    </source>
</evidence>
<evidence type="ECO:0000305" key="5"/>
<keyword id="KW-0027">Amidation</keyword>
<keyword id="KW-0903">Direct protein sequencing</keyword>
<keyword id="KW-1015">Disulfide bond</keyword>
<keyword id="KW-0872">Ion channel impairing toxin</keyword>
<keyword id="KW-0528">Neurotoxin</keyword>
<keyword id="KW-0964">Secreted</keyword>
<keyword id="KW-0800">Toxin</keyword>
<keyword id="KW-0738">Voltage-gated sodium channel impairing toxin</keyword>
<protein>
    <recommendedName>
        <fullName evidence="4">Alpha-toxin Tf4</fullName>
    </recommendedName>
    <alternativeName>
        <fullName>Neurotoxin 4</fullName>
    </alternativeName>
    <alternativeName>
        <fullName>P-Frog-alpha NaTx4.4</fullName>
    </alternativeName>
</protein>
<name>SCX4_TITFA</name>
<sequence length="62" mass="6623">GKEGYPADSKGCKVTCFFTGVGYCDTECKLKKASSGYCAWPACYCYGLPDSASVWDSATNKC</sequence>
<organism>
    <name type="scientific">Tityus fasciolatus</name>
    <name type="common">Central Brazilian scorpion</name>
    <dbReference type="NCBI Taxonomy" id="203543"/>
    <lineage>
        <taxon>Eukaryota</taxon>
        <taxon>Metazoa</taxon>
        <taxon>Ecdysozoa</taxon>
        <taxon>Arthropoda</taxon>
        <taxon>Chelicerata</taxon>
        <taxon>Arachnida</taxon>
        <taxon>Scorpiones</taxon>
        <taxon>Buthida</taxon>
        <taxon>Buthoidea</taxon>
        <taxon>Buthidae</taxon>
        <taxon>Tityus</taxon>
    </lineage>
</organism>
<comment type="function">
    <text evidence="3">Alpha toxins bind voltage-independently at site-3 of sodium channels (Nav) and inhibit the inactivation of the activated channels, thereby blocking neuronal transmission (PubMed:12782073). This toxin is toxic to frogs but non-toxic to insect larvae (T.molitor), mammals (rats) and crustaceans (crabs) at the doses assayed (PubMed:12782073).</text>
</comment>
<comment type="subcellular location">
    <subcellularLocation>
        <location evidence="3 5">Secreted</location>
    </subcellularLocation>
</comment>
<comment type="tissue specificity">
    <text evidence="3">Expressed by the venom gland.</text>
</comment>
<comment type="domain">
    <text evidence="5">Has the structural arrangement of an alpha-helix connected to antiparallel beta-sheets by disulfide bonds (CS-alpha/beta).</text>
</comment>
<comment type="mass spectrometry" mass="6614.3" method="Electrospray" evidence="3"/>
<comment type="similarity">
    <text evidence="5">Belongs to the long (4 C-C) scorpion toxin superfamily. Sodium channel inhibitor family. Alpha subfamily.</text>
</comment>
<dbReference type="SMR" id="P83435"/>
<dbReference type="GO" id="GO:0005576">
    <property type="term" value="C:extracellular region"/>
    <property type="evidence" value="ECO:0007669"/>
    <property type="project" value="UniProtKB-SubCell"/>
</dbReference>
<dbReference type="GO" id="GO:0019871">
    <property type="term" value="F:sodium channel inhibitor activity"/>
    <property type="evidence" value="ECO:0007669"/>
    <property type="project" value="InterPro"/>
</dbReference>
<dbReference type="GO" id="GO:0090729">
    <property type="term" value="F:toxin activity"/>
    <property type="evidence" value="ECO:0007669"/>
    <property type="project" value="UniProtKB-KW"/>
</dbReference>
<dbReference type="GO" id="GO:0006952">
    <property type="term" value="P:defense response"/>
    <property type="evidence" value="ECO:0007669"/>
    <property type="project" value="InterPro"/>
</dbReference>
<dbReference type="CDD" id="cd23106">
    <property type="entry name" value="neurotoxins_LC_scorpion"/>
    <property type="match status" value="1"/>
</dbReference>
<dbReference type="FunFam" id="3.30.30.10:FF:000002">
    <property type="entry name" value="Alpha-like toxin BmK-M1"/>
    <property type="match status" value="1"/>
</dbReference>
<dbReference type="Gene3D" id="3.30.30.10">
    <property type="entry name" value="Knottin, scorpion toxin-like"/>
    <property type="match status" value="1"/>
</dbReference>
<dbReference type="InterPro" id="IPR044062">
    <property type="entry name" value="LCN-type_CS_alpha_beta_dom"/>
</dbReference>
<dbReference type="InterPro" id="IPR003614">
    <property type="entry name" value="Scorpion_toxin-like"/>
</dbReference>
<dbReference type="InterPro" id="IPR036574">
    <property type="entry name" value="Scorpion_toxin-like_sf"/>
</dbReference>
<dbReference type="InterPro" id="IPR018218">
    <property type="entry name" value="Scorpion_toxinL"/>
</dbReference>
<dbReference type="InterPro" id="IPR002061">
    <property type="entry name" value="Scorpion_toxinL/defensin"/>
</dbReference>
<dbReference type="Pfam" id="PF00537">
    <property type="entry name" value="Toxin_3"/>
    <property type="match status" value="1"/>
</dbReference>
<dbReference type="PRINTS" id="PR00285">
    <property type="entry name" value="SCORPNTOXIN"/>
</dbReference>
<dbReference type="SMART" id="SM00505">
    <property type="entry name" value="Knot1"/>
    <property type="match status" value="1"/>
</dbReference>
<dbReference type="SUPFAM" id="SSF57095">
    <property type="entry name" value="Scorpion toxin-like"/>
    <property type="match status" value="1"/>
</dbReference>
<dbReference type="PROSITE" id="PS51863">
    <property type="entry name" value="LCN_CSAB"/>
    <property type="match status" value="1"/>
</dbReference>
<reference key="1">
    <citation type="journal article" date="2003" name="Toxicon">
        <title>Purification and primary structure determination of Tf4, the first bioactive peptide isolated from the venom of the Brazilian scorpion Tityus fasciolatus.</title>
        <authorList>
            <person name="Wagner S."/>
            <person name="Castro M.S."/>
            <person name="Barbosa J.A.R.G."/>
            <person name="Fontes W."/>
            <person name="Schwartz E.N.F."/>
            <person name="Sebben A."/>
            <person name="Pires O.R. Jr."/>
            <person name="Sousa M.V."/>
            <person name="Schwartz C.A."/>
        </authorList>
    </citation>
    <scope>PROTEIN SEQUENCE</scope>
    <scope>FUNCTION</scope>
    <scope>SUBCELLULAR LOCATION</scope>
    <scope>TISSUE SPECIFICITY</scope>
    <scope>MASS SPECTROMETRY</scope>
    <source>
        <tissue>Venom</tissue>
    </source>
</reference>
<reference key="2">
    <citation type="journal article" date="2012" name="PLoS ONE">
        <title>Identification and phylogenetic analysis of Tityus pachyurus and Tityus obscurus novel putative Na+-channel scorpion toxins.</title>
        <authorList>
            <person name="Guerrero-Vargas J.A."/>
            <person name="Mourao C.B."/>
            <person name="Quintero-Hernandez V."/>
            <person name="Possani L.D."/>
            <person name="Schwartz E.F."/>
        </authorList>
    </citation>
    <scope>NOMENCLATURE</scope>
</reference>
<accession>P83435</accession>
<feature type="chain" id="PRO_0000066827" description="Alpha-toxin Tf4" evidence="3">
    <location>
        <begin position="1"/>
        <end position="62"/>
    </location>
</feature>
<feature type="domain" description="LCN-type CS-alpha/beta" evidence="2">
    <location>
        <begin position="2"/>
        <end position="62"/>
    </location>
</feature>
<feature type="modified residue" description="Cysteine amide" evidence="1">
    <location>
        <position position="62"/>
    </location>
</feature>
<feature type="disulfide bond" evidence="2">
    <location>
        <begin position="12"/>
        <end position="62"/>
    </location>
</feature>
<feature type="disulfide bond" evidence="2">
    <location>
        <begin position="16"/>
        <end position="38"/>
    </location>
</feature>
<feature type="disulfide bond" evidence="2">
    <location>
        <begin position="24"/>
        <end position="43"/>
    </location>
</feature>
<feature type="disulfide bond" evidence="2">
    <location>
        <begin position="28"/>
        <end position="45"/>
    </location>
</feature>